<dbReference type="EMBL" id="X54244">
    <property type="protein sequence ID" value="CAA38148.1"/>
    <property type="molecule type" value="mRNA"/>
</dbReference>
<dbReference type="PIR" id="A60033">
    <property type="entry name" value="CHCHA1"/>
</dbReference>
<dbReference type="RefSeq" id="NP_989649.1">
    <property type="nucleotide sequence ID" value="NM_204318.3"/>
</dbReference>
<dbReference type="RefSeq" id="XP_015149123.1">
    <property type="nucleotide sequence ID" value="XM_015293637.1"/>
</dbReference>
<dbReference type="RefSeq" id="XP_025010549.1">
    <property type="nucleotide sequence ID" value="XM_025154781.3"/>
</dbReference>
<dbReference type="RefSeq" id="XP_046782715.1">
    <property type="nucleotide sequence ID" value="XM_046926759.1"/>
</dbReference>
<dbReference type="RefSeq" id="XP_046782716.1">
    <property type="nucleotide sequence ID" value="XM_046926760.1"/>
</dbReference>
<dbReference type="RefSeq" id="XP_046782717.1">
    <property type="nucleotide sequence ID" value="XM_046926761.1"/>
</dbReference>
<dbReference type="SMR" id="P19150"/>
<dbReference type="FunCoup" id="P19150">
    <property type="interactions" value="107"/>
</dbReference>
<dbReference type="STRING" id="9031.ENSGALP00000002606"/>
<dbReference type="GlyCosmos" id="P19150">
    <property type="glycosylation" value="2 sites, No reported glycans"/>
</dbReference>
<dbReference type="GlyGen" id="P19150">
    <property type="glycosylation" value="2 sites"/>
</dbReference>
<dbReference type="PaxDb" id="9031-ENSGALP00000002606"/>
<dbReference type="Ensembl" id="ENSGALT00010023495.1">
    <property type="protein sequence ID" value="ENSGALP00010013552.1"/>
    <property type="gene ID" value="ENSGALG00010009841.1"/>
</dbReference>
<dbReference type="GeneID" id="374214"/>
<dbReference type="KEGG" id="gga:374214"/>
<dbReference type="CTD" id="2554"/>
<dbReference type="VEuPathDB" id="HostDB:geneid_374214"/>
<dbReference type="eggNOG" id="KOG3642">
    <property type="taxonomic scope" value="Eukaryota"/>
</dbReference>
<dbReference type="GeneTree" id="ENSGT00940000159136"/>
<dbReference type="HOGENOM" id="CLU_010920_2_1_1"/>
<dbReference type="InParanoid" id="P19150"/>
<dbReference type="OMA" id="YLWAYLF"/>
<dbReference type="OrthoDB" id="203862at2759"/>
<dbReference type="PhylomeDB" id="P19150"/>
<dbReference type="TreeFam" id="TF315453"/>
<dbReference type="Reactome" id="R-GGA-977443">
    <property type="pathway name" value="GABA receptor activation"/>
</dbReference>
<dbReference type="PRO" id="PR:P19150"/>
<dbReference type="Proteomes" id="UP000000539">
    <property type="component" value="Chromosome 13"/>
</dbReference>
<dbReference type="Bgee" id="ENSGALG00000001698">
    <property type="expression patterns" value="Expressed in cerebellum and 6 other cell types or tissues"/>
</dbReference>
<dbReference type="GO" id="GO:0034707">
    <property type="term" value="C:chloride channel complex"/>
    <property type="evidence" value="ECO:0007669"/>
    <property type="project" value="UniProtKB-KW"/>
</dbReference>
<dbReference type="GO" id="GO:0032590">
    <property type="term" value="C:dendrite membrane"/>
    <property type="evidence" value="ECO:0000318"/>
    <property type="project" value="GO_Central"/>
</dbReference>
<dbReference type="GO" id="GO:1902711">
    <property type="term" value="C:GABA-A receptor complex"/>
    <property type="evidence" value="ECO:0000250"/>
    <property type="project" value="UniProtKB"/>
</dbReference>
<dbReference type="GO" id="GO:0098794">
    <property type="term" value="C:postsynapse"/>
    <property type="evidence" value="ECO:0000318"/>
    <property type="project" value="GO_Central"/>
</dbReference>
<dbReference type="GO" id="GO:0099634">
    <property type="term" value="C:postsynaptic specialization membrane"/>
    <property type="evidence" value="ECO:0000250"/>
    <property type="project" value="UniProtKB"/>
</dbReference>
<dbReference type="GO" id="GO:0004890">
    <property type="term" value="F:GABA-A receptor activity"/>
    <property type="evidence" value="ECO:0000250"/>
    <property type="project" value="UniProtKB"/>
</dbReference>
<dbReference type="GO" id="GO:0022851">
    <property type="term" value="F:GABA-gated chloride ion channel activity"/>
    <property type="evidence" value="ECO:0000250"/>
    <property type="project" value="UniProtKB"/>
</dbReference>
<dbReference type="GO" id="GO:1902476">
    <property type="term" value="P:chloride transmembrane transport"/>
    <property type="evidence" value="ECO:0000318"/>
    <property type="project" value="GO_Central"/>
</dbReference>
<dbReference type="GO" id="GO:0007214">
    <property type="term" value="P:gamma-aminobutyric acid signaling pathway"/>
    <property type="evidence" value="ECO:0000318"/>
    <property type="project" value="GO_Central"/>
</dbReference>
<dbReference type="GO" id="GO:1904862">
    <property type="term" value="P:inhibitory synapse assembly"/>
    <property type="evidence" value="ECO:0000250"/>
    <property type="project" value="UniProtKB"/>
</dbReference>
<dbReference type="GO" id="GO:0051932">
    <property type="term" value="P:synaptic transmission, GABAergic"/>
    <property type="evidence" value="ECO:0000318"/>
    <property type="project" value="GO_Central"/>
</dbReference>
<dbReference type="CDD" id="cd19034">
    <property type="entry name" value="LGIC_ECD_GABAAR_A1"/>
    <property type="match status" value="1"/>
</dbReference>
<dbReference type="CDD" id="cd19052">
    <property type="entry name" value="LGIC_TM_GABAAR_alpha"/>
    <property type="match status" value="1"/>
</dbReference>
<dbReference type="FunFam" id="2.70.170.10:FF:000001">
    <property type="entry name" value="Gamma-aminobutyric acid A receptor subunit alpha-2"/>
    <property type="match status" value="1"/>
</dbReference>
<dbReference type="FunFam" id="1.20.58.390:FF:000002">
    <property type="entry name" value="Putative gamma-aminobutyric acid receptor subunit alpha-5"/>
    <property type="match status" value="1"/>
</dbReference>
<dbReference type="Gene3D" id="2.70.170.10">
    <property type="entry name" value="Neurotransmitter-gated ion-channel ligand-binding domain"/>
    <property type="match status" value="1"/>
</dbReference>
<dbReference type="Gene3D" id="1.20.58.390">
    <property type="entry name" value="Neurotransmitter-gated ion-channel transmembrane domain"/>
    <property type="match status" value="1"/>
</dbReference>
<dbReference type="InterPro" id="IPR006028">
    <property type="entry name" value="GABAA/Glycine_rcpt"/>
</dbReference>
<dbReference type="InterPro" id="IPR001390">
    <property type="entry name" value="GABAAa_rcpt"/>
</dbReference>
<dbReference type="InterPro" id="IPR005431">
    <property type="entry name" value="GABBAa1_rcpt"/>
</dbReference>
<dbReference type="InterPro" id="IPR047024">
    <property type="entry name" value="Gabra-1-6_TM"/>
</dbReference>
<dbReference type="InterPro" id="IPR047079">
    <property type="entry name" value="GABRA1_ECD"/>
</dbReference>
<dbReference type="InterPro" id="IPR006202">
    <property type="entry name" value="Neur_chan_lig-bd"/>
</dbReference>
<dbReference type="InterPro" id="IPR036734">
    <property type="entry name" value="Neur_chan_lig-bd_sf"/>
</dbReference>
<dbReference type="InterPro" id="IPR006201">
    <property type="entry name" value="Neur_channel"/>
</dbReference>
<dbReference type="InterPro" id="IPR036719">
    <property type="entry name" value="Neuro-gated_channel_TM_sf"/>
</dbReference>
<dbReference type="InterPro" id="IPR038050">
    <property type="entry name" value="Neuro_actylchol_rec"/>
</dbReference>
<dbReference type="InterPro" id="IPR006029">
    <property type="entry name" value="Neurotrans-gated_channel_TM"/>
</dbReference>
<dbReference type="InterPro" id="IPR018000">
    <property type="entry name" value="Neurotransmitter_ion_chnl_CS"/>
</dbReference>
<dbReference type="NCBIfam" id="TIGR00860">
    <property type="entry name" value="LIC"/>
    <property type="match status" value="1"/>
</dbReference>
<dbReference type="PANTHER" id="PTHR18945">
    <property type="entry name" value="NEUROTRANSMITTER GATED ION CHANNEL"/>
    <property type="match status" value="1"/>
</dbReference>
<dbReference type="Pfam" id="PF02931">
    <property type="entry name" value="Neur_chan_LBD"/>
    <property type="match status" value="1"/>
</dbReference>
<dbReference type="Pfam" id="PF02932">
    <property type="entry name" value="Neur_chan_memb"/>
    <property type="match status" value="1"/>
</dbReference>
<dbReference type="PRINTS" id="PR01079">
    <property type="entry name" value="GABAARALPHA"/>
</dbReference>
<dbReference type="PRINTS" id="PR01614">
    <property type="entry name" value="GABAARALPHA1"/>
</dbReference>
<dbReference type="PRINTS" id="PR00253">
    <property type="entry name" value="GABAARECEPTR"/>
</dbReference>
<dbReference type="PRINTS" id="PR00252">
    <property type="entry name" value="NRIONCHANNEL"/>
</dbReference>
<dbReference type="SUPFAM" id="SSF90112">
    <property type="entry name" value="Neurotransmitter-gated ion-channel transmembrane pore"/>
    <property type="match status" value="1"/>
</dbReference>
<dbReference type="SUPFAM" id="SSF63712">
    <property type="entry name" value="Nicotinic receptor ligand binding domain-like"/>
    <property type="match status" value="1"/>
</dbReference>
<dbReference type="PROSITE" id="PS00236">
    <property type="entry name" value="NEUROTR_ION_CHANNEL"/>
    <property type="match status" value="1"/>
</dbReference>
<proteinExistence type="evidence at transcript level"/>
<feature type="signal peptide" evidence="5">
    <location>
        <begin position="1"/>
        <end position="27"/>
    </location>
</feature>
<feature type="chain" id="PRO_0000000431" description="Gamma-aminobutyric acid receptor subunit alpha-1">
    <location>
        <begin position="28"/>
        <end position="455"/>
    </location>
</feature>
<feature type="topological domain" description="Extracellular" evidence="7">
    <location>
        <begin position="28"/>
        <end position="253"/>
    </location>
</feature>
<feature type="transmembrane region" description="Helical" evidence="2">
    <location>
        <begin position="254"/>
        <end position="274"/>
    </location>
</feature>
<feature type="topological domain" description="Cytoplasmic" evidence="7">
    <location>
        <begin position="275"/>
        <end position="279"/>
    </location>
</feature>
<feature type="transmembrane region" description="Helical" evidence="2">
    <location>
        <begin position="280"/>
        <end position="301"/>
    </location>
</feature>
<feature type="topological domain" description="Extracellular" evidence="7">
    <location>
        <begin position="302"/>
        <end position="311"/>
    </location>
</feature>
<feature type="transmembrane region" description="Helical" evidence="2">
    <location>
        <begin position="312"/>
        <end position="333"/>
    </location>
</feature>
<feature type="topological domain" description="Cytoplasmic" evidence="7">
    <location>
        <begin position="334"/>
        <end position="420"/>
    </location>
</feature>
<feature type="transmembrane region" description="Helical" evidence="2">
    <location>
        <begin position="421"/>
        <end position="440"/>
    </location>
</feature>
<feature type="topological domain" description="Extracellular" evidence="7">
    <location>
        <begin position="441"/>
        <end position="455"/>
    </location>
</feature>
<feature type="binding site" evidence="2 4">
    <location>
        <position position="94"/>
    </location>
    <ligand>
        <name>4-aminobutanoate</name>
        <dbReference type="ChEBI" id="CHEBI:59888"/>
        <note>ligand shared with the neighboring beta subunit</note>
    </ligand>
</feature>
<feature type="binding site" evidence="4">
    <location>
        <position position="157"/>
    </location>
    <ligand>
        <name>4-aminobutanoate</name>
        <dbReference type="ChEBI" id="CHEBI:59888"/>
        <note>ligand shared with the neighboring beta subunit</note>
    </ligand>
</feature>
<feature type="glycosylation site" description="N-linked (GlcNAc...) asparagine" evidence="5">
    <location>
        <position position="38"/>
    </location>
</feature>
<feature type="glycosylation site" description="N-linked (GlcNAc...) asparagine" evidence="5">
    <location>
        <position position="138"/>
    </location>
</feature>
<feature type="disulfide bond" evidence="2">
    <location>
        <begin position="166"/>
        <end position="180"/>
    </location>
</feature>
<comment type="function">
    <text evidence="1 2 4">Alpha subunit of the heteropentameric ligand-gated chloride channel gated by gamma-aminobutyric acid (GABA), a major inhibitory neurotransmitter in the brain. GABA-gated chloride channels, also named GABA(A) receptors (GABAAR), consist of five subunits arranged around a central pore and contain GABA active binding site(s) located at the alpha and beta subunit interface(s) (By similarity). When activated by GABA, GABAARs selectively allow the flow of chloride anions across the cell membrane down their electrochemical gradient (By similarity). Chloride influx into the postsynaptic neuron following GABAAR opening decreases the neuron ability to generate a new action potential, thereby reducing nerve transmission (By similarity). The GABAARs can also initiate the formation of functional inhibitory GABAergic synapses (By similarity). GABAARs function also as histamine receptor where histamine binds at the interface of two neighboring beta subunits and potentiates GABA response (By similarity).</text>
</comment>
<comment type="catalytic activity">
    <reaction evidence="1">
        <text>chloride(in) = chloride(out)</text>
        <dbReference type="Rhea" id="RHEA:29823"/>
        <dbReference type="ChEBI" id="CHEBI:17996"/>
    </reaction>
</comment>
<comment type="activity regulation">
    <text evidence="2 4">Allosterically activated by benzodiazepines, the neuroanesthetic alphaxalone and pentobarbital (By similarity). Inhibited by the antagonist bicuculline (By similarity). Potentiated by histamine (By similarity).</text>
</comment>
<comment type="subunit">
    <text evidence="2">Heteropentamer, formed by a combination of alpha (GABRA1-6), beta (GABRB1-3), gamma (GABRG1-3), delta (GABRD), epsilon (GABRE), rho (GABRR1-3), pi (GABRP) and theta (GABRQ) subunits, each subunit exhibiting distinct physiological and pharmacological properties.</text>
</comment>
<comment type="subcellular location">
    <subcellularLocation>
        <location evidence="1">Postsynaptic cell membrane</location>
        <topology evidence="2">Multi-pass membrane protein</topology>
    </subcellularLocation>
    <subcellularLocation>
        <location evidence="3">Cell membrane</location>
        <topology evidence="2">Multi-pass membrane protein</topology>
    </subcellularLocation>
</comment>
<comment type="tissue specificity">
    <text evidence="6">Brain.</text>
</comment>
<comment type="domain">
    <text evidence="3">The extracellular domain contributes to synaptic contact formation.</text>
</comment>
<comment type="domain">
    <text evidence="2">The GABA-binding pockets are located at the interface between neighboring alpha and beta subunits.</text>
</comment>
<comment type="domain">
    <text evidence="2">GABAARs subunits share a common topological structure: a peptide sequence made up of a long extracellular N-terminal, four transmembrane domains, intracellular or cytoplasmic domain located between the third and the fourth transmembrane domains.</text>
</comment>
<comment type="similarity">
    <text evidence="7">Belongs to the ligand-gated ion channel (TC 1.A.9) family. Gamma-aminobutyric acid receptor (TC 1.A.9.5) subfamily. GABRA1 sub-subfamily.</text>
</comment>
<name>GBRA1_CHICK</name>
<organism>
    <name type="scientific">Gallus gallus</name>
    <name type="common">Chicken</name>
    <dbReference type="NCBI Taxonomy" id="9031"/>
    <lineage>
        <taxon>Eukaryota</taxon>
        <taxon>Metazoa</taxon>
        <taxon>Chordata</taxon>
        <taxon>Craniata</taxon>
        <taxon>Vertebrata</taxon>
        <taxon>Euteleostomi</taxon>
        <taxon>Archelosauria</taxon>
        <taxon>Archosauria</taxon>
        <taxon>Dinosauria</taxon>
        <taxon>Saurischia</taxon>
        <taxon>Theropoda</taxon>
        <taxon>Coelurosauria</taxon>
        <taxon>Aves</taxon>
        <taxon>Neognathae</taxon>
        <taxon>Galloanserae</taxon>
        <taxon>Galliformes</taxon>
        <taxon>Phasianidae</taxon>
        <taxon>Phasianinae</taxon>
        <taxon>Gallus</taxon>
    </lineage>
</organism>
<protein>
    <recommendedName>
        <fullName>Gamma-aminobutyric acid receptor subunit alpha-1</fullName>
    </recommendedName>
    <alternativeName>
        <fullName evidence="2">GABA(A) receptor subunit alpha-1</fullName>
        <shortName evidence="2">GABAAR subunit alpha-1</shortName>
    </alternativeName>
</protein>
<sequence length="455" mass="51842">MKRLLVLCDCLWAWSLLLNALTERSYGQTSSQDELKDNTTVFTRILDRLLDGYDNRLRPGLGERVTEVKTDIFVTSFGPVSDHDMEYTIDVFFRQSWKDERLKFKGPMTVLRLNNLMASKIWTPDTFFHNGKKSVAHNMTMPNKLLRITEDGTLLYTMRLTVRAECPMHLEDFPMDVHACPLKFGSYAYTRAEVVYEWTREPARSVVVAEDGSRLNQYDLLGQTVDSGIVQSSTGEYVVMTTHFHLKRKIGYFVIQTYLPCIMTVILSQVSFWLNRESVPARTVFGVTTVLTMTTLSISARNSLPKVAYATAMDWFIAVCYAFVFSALIEFATVNYFTKRGYAWDGKSVVPEKPKKVKDPLIKKNNTYTAAATSYTPNIARDPGLATIAKSATIEPKEVKPETKPAEPKKTFNSVSKIDRLSRIAFPLLFGIFNLVYWATYLNREPQLKAPTPHQ</sequence>
<gene>
    <name type="primary">GABRA1</name>
</gene>
<reference key="1">
    <citation type="journal article" date="1991" name="Brain Res. Mol. Brain Res.">
        <title>The chicken GABAA receptor alpha 1 subunit: cDNA sequence and localization of the corresponding mRNA.</title>
        <authorList>
            <person name="Bateson A.N."/>
            <person name="Harvey R.J."/>
            <person name="Wisden W."/>
            <person name="Glencorse T.A."/>
            <person name="Hicks A.A."/>
            <person name="Hunt S.P."/>
            <person name="Barnard E.A."/>
            <person name="Darlison M.G."/>
        </authorList>
    </citation>
    <scope>NUCLEOTIDE SEQUENCE [MRNA]</scope>
    <scope>TISSUE SPECIFICITY</scope>
    <source>
        <strain>Commercial Rhode Island cross</strain>
        <tissue>Brain</tissue>
    </source>
</reference>
<keyword id="KW-1003">Cell membrane</keyword>
<keyword id="KW-0868">Chloride</keyword>
<keyword id="KW-0869">Chloride channel</keyword>
<keyword id="KW-1015">Disulfide bond</keyword>
<keyword id="KW-0325">Glycoprotein</keyword>
<keyword id="KW-0407">Ion channel</keyword>
<keyword id="KW-0406">Ion transport</keyword>
<keyword id="KW-1071">Ligand-gated ion channel</keyword>
<keyword id="KW-0472">Membrane</keyword>
<keyword id="KW-0628">Postsynaptic cell membrane</keyword>
<keyword id="KW-0675">Receptor</keyword>
<keyword id="KW-1185">Reference proteome</keyword>
<keyword id="KW-0732">Signal</keyword>
<keyword id="KW-0770">Synapse</keyword>
<keyword id="KW-0812">Transmembrane</keyword>
<keyword id="KW-1133">Transmembrane helix</keyword>
<keyword id="KW-0813">Transport</keyword>
<evidence type="ECO:0000250" key="1">
    <source>
        <dbReference type="UniProtKB" id="P08219"/>
    </source>
</evidence>
<evidence type="ECO:0000250" key="2">
    <source>
        <dbReference type="UniProtKB" id="P14867"/>
    </source>
</evidence>
<evidence type="ECO:0000250" key="3">
    <source>
        <dbReference type="UniProtKB" id="P62812"/>
    </source>
</evidence>
<evidence type="ECO:0000250" key="4">
    <source>
        <dbReference type="UniProtKB" id="P62813"/>
    </source>
</evidence>
<evidence type="ECO:0000255" key="5"/>
<evidence type="ECO:0000269" key="6">
    <source>
    </source>
</evidence>
<evidence type="ECO:0000305" key="7"/>
<accession>P19150</accession>